<feature type="chain" id="PRO_0000171066" description="ATP phosphoribosyltransferase regulatory subunit">
    <location>
        <begin position="1"/>
        <end position="270"/>
    </location>
</feature>
<protein>
    <recommendedName>
        <fullName>ATP phosphoribosyltransferase regulatory subunit</fullName>
    </recommendedName>
</protein>
<reference key="1">
    <citation type="journal article" date="2005" name="J. Bacteriol.">
        <title>Insights on evolution of virulence and resistance from the complete genome analysis of an early methicillin-resistant Staphylococcus aureus strain and a biofilm-producing methicillin-resistant Staphylococcus epidermidis strain.</title>
        <authorList>
            <person name="Gill S.R."/>
            <person name="Fouts D.E."/>
            <person name="Archer G.L."/>
            <person name="Mongodin E.F."/>
            <person name="DeBoy R.T."/>
            <person name="Ravel J."/>
            <person name="Paulsen I.T."/>
            <person name="Kolonay J.F."/>
            <person name="Brinkac L.M."/>
            <person name="Beanan M.J."/>
            <person name="Dodson R.J."/>
            <person name="Daugherty S.C."/>
            <person name="Madupu R."/>
            <person name="Angiuoli S.V."/>
            <person name="Durkin A.S."/>
            <person name="Haft D.H."/>
            <person name="Vamathevan J.J."/>
            <person name="Khouri H."/>
            <person name="Utterback T.R."/>
            <person name="Lee C."/>
            <person name="Dimitrov G."/>
            <person name="Jiang L."/>
            <person name="Qin H."/>
            <person name="Weidman J."/>
            <person name="Tran K."/>
            <person name="Kang K.H."/>
            <person name="Hance I.R."/>
            <person name="Nelson K.E."/>
            <person name="Fraser C.M."/>
        </authorList>
    </citation>
    <scope>NUCLEOTIDE SEQUENCE [LARGE SCALE GENOMIC DNA]</scope>
    <source>
        <strain>ATCC 35984 / DSM 28319 / BCRC 17069 / CCUG 31568 / BM 3577 / RP62A</strain>
    </source>
</reference>
<organism>
    <name type="scientific">Staphylococcus epidermidis (strain ATCC 35984 / DSM 28319 / BCRC 17069 / CCUG 31568 / BM 3577 / RP62A)</name>
    <dbReference type="NCBI Taxonomy" id="176279"/>
    <lineage>
        <taxon>Bacteria</taxon>
        <taxon>Bacillati</taxon>
        <taxon>Bacillota</taxon>
        <taxon>Bacilli</taxon>
        <taxon>Bacillales</taxon>
        <taxon>Staphylococcaceae</taxon>
        <taxon>Staphylococcus</taxon>
    </lineage>
</organism>
<evidence type="ECO:0000250" key="1"/>
<evidence type="ECO:0000305" key="2"/>
<comment type="function">
    <text evidence="1">Required for the first step of histidine biosynthesis. May allow the feedback regulation of ATP phosphoribosyltransferase activity by histidine (By similarity).</text>
</comment>
<comment type="pathway">
    <text>Amino-acid biosynthesis; L-histidine biosynthesis; L-histidine from 5-phospho-alpha-D-ribose 1-diphosphate: step 1/9.</text>
</comment>
<comment type="subunit">
    <text evidence="1">Heteromultimer composed of HisG and HisZ subunits.</text>
</comment>
<comment type="subcellular location">
    <subcellularLocation>
        <location evidence="1">Cytoplasm</location>
    </subcellularLocation>
</comment>
<comment type="miscellaneous">
    <text>This function is generally fulfilled by the C-terminal part of HisG, which is missing in some bacteria such as this one.</text>
</comment>
<comment type="similarity">
    <text evidence="2">Belongs to the class-II aminoacyl-tRNA synthetase family. HisZ subfamily.</text>
</comment>
<accession>Q5HKN6</accession>
<sequence>MNNTIISMKEKELRFLKFFHQQKYNVVDFNLIEELDWQRLTHEDLQQMDERSFWQQNKSIYALRNDFTDQLFRYYSNYPTHFKKVAYAGDIIRDNRVIKQVGIENYEPQFDNITQNFLDFQYFIQNVLHDDIQFIILGHYQLIDALLEKNHQTREVMEMIEERNLSGLIQTLTFNHPIIQILKENTLNQLKILSHYLPERHPAMVAIQSWSQWFTDHGITEIHLDVTAQAPRSYYKGIFIKCHLKNTAHSVLTGGYYHGSLEGFGLGLTL</sequence>
<gene>
    <name type="primary">hisZ</name>
    <name type="ordered locus">SERP2307</name>
</gene>
<keyword id="KW-0028">Amino-acid biosynthesis</keyword>
<keyword id="KW-0963">Cytoplasm</keyword>
<keyword id="KW-0368">Histidine biosynthesis</keyword>
<keyword id="KW-1185">Reference proteome</keyword>
<name>HISZ_STAEQ</name>
<proteinExistence type="inferred from homology"/>
<dbReference type="EMBL" id="CP000029">
    <property type="protein sequence ID" value="AAW53204.1"/>
    <property type="molecule type" value="Genomic_DNA"/>
</dbReference>
<dbReference type="RefSeq" id="WP_002470288.1">
    <property type="nucleotide sequence ID" value="NC_002976.3"/>
</dbReference>
<dbReference type="SMR" id="Q5HKN6"/>
<dbReference type="STRING" id="176279.SERP2307"/>
<dbReference type="KEGG" id="ser:SERP2307"/>
<dbReference type="eggNOG" id="COG3705">
    <property type="taxonomic scope" value="Bacteria"/>
</dbReference>
<dbReference type="HOGENOM" id="CLU_089652_0_0_9"/>
<dbReference type="UniPathway" id="UPA00031">
    <property type="reaction ID" value="UER00006"/>
</dbReference>
<dbReference type="Proteomes" id="UP000000531">
    <property type="component" value="Chromosome"/>
</dbReference>
<dbReference type="GO" id="GO:0005737">
    <property type="term" value="C:cytoplasm"/>
    <property type="evidence" value="ECO:0007669"/>
    <property type="project" value="UniProtKB-SubCell"/>
</dbReference>
<dbReference type="GO" id="GO:0140096">
    <property type="term" value="F:catalytic activity, acting on a protein"/>
    <property type="evidence" value="ECO:0007669"/>
    <property type="project" value="UniProtKB-ARBA"/>
</dbReference>
<dbReference type="GO" id="GO:0016740">
    <property type="term" value="F:transferase activity"/>
    <property type="evidence" value="ECO:0007669"/>
    <property type="project" value="UniProtKB-ARBA"/>
</dbReference>
<dbReference type="GO" id="GO:0000105">
    <property type="term" value="P:L-histidine biosynthetic process"/>
    <property type="evidence" value="ECO:0007669"/>
    <property type="project" value="UniProtKB-UniPathway"/>
</dbReference>
<dbReference type="Gene3D" id="3.30.930.10">
    <property type="entry name" value="Bira Bifunctional Protein, Domain 2"/>
    <property type="match status" value="1"/>
</dbReference>
<dbReference type="InterPro" id="IPR045864">
    <property type="entry name" value="aa-tRNA-synth_II/BPL/LPL"/>
</dbReference>
<dbReference type="InterPro" id="IPR041715">
    <property type="entry name" value="HisRS-like_core"/>
</dbReference>
<dbReference type="NCBIfam" id="NF008947">
    <property type="entry name" value="PRK12294.1"/>
    <property type="match status" value="1"/>
</dbReference>
<dbReference type="Pfam" id="PF13393">
    <property type="entry name" value="tRNA-synt_His"/>
    <property type="match status" value="1"/>
</dbReference>
<dbReference type="SUPFAM" id="SSF55681">
    <property type="entry name" value="Class II aaRS and biotin synthetases"/>
    <property type="match status" value="1"/>
</dbReference>